<name>FUCL_ANGAN</name>
<dbReference type="PDB" id="1K12">
    <property type="method" value="X-ray"/>
    <property type="resolution" value="1.90 A"/>
    <property type="chains" value="A=1-158"/>
</dbReference>
<dbReference type="PDBsum" id="1K12"/>
<dbReference type="SMR" id="Q7SIC1"/>
<dbReference type="CAZy" id="CBM47">
    <property type="family name" value="Carbohydrate-Binding Module Family 47"/>
</dbReference>
<dbReference type="UniLectin" id="Q7SIC1"/>
<dbReference type="EvolutionaryTrace" id="Q7SIC1"/>
<dbReference type="GO" id="GO:0005576">
    <property type="term" value="C:extracellular region"/>
    <property type="evidence" value="ECO:0007669"/>
    <property type="project" value="UniProtKB-SubCell"/>
</dbReference>
<dbReference type="GO" id="GO:0005509">
    <property type="term" value="F:calcium ion binding"/>
    <property type="evidence" value="ECO:0000314"/>
    <property type="project" value="UniProtKB"/>
</dbReference>
<dbReference type="GO" id="GO:0030246">
    <property type="term" value="F:carbohydrate binding"/>
    <property type="evidence" value="ECO:0000314"/>
    <property type="project" value="UniProtKB"/>
</dbReference>
<dbReference type="GO" id="GO:0042806">
    <property type="term" value="F:fucose binding"/>
    <property type="evidence" value="ECO:0000314"/>
    <property type="project" value="UniProtKB"/>
</dbReference>
<dbReference type="GO" id="GO:0010185">
    <property type="term" value="P:regulation of cellular defense response"/>
    <property type="evidence" value="ECO:0000304"/>
    <property type="project" value="UniProtKB"/>
</dbReference>
<dbReference type="GO" id="GO:0001868">
    <property type="term" value="P:regulation of complement activation, lectin pathway"/>
    <property type="evidence" value="ECO:0000304"/>
    <property type="project" value="UniProtKB"/>
</dbReference>
<dbReference type="GO" id="GO:0045088">
    <property type="term" value="P:regulation of innate immune response"/>
    <property type="evidence" value="ECO:0000304"/>
    <property type="project" value="UniProtKB"/>
</dbReference>
<dbReference type="FunFam" id="2.60.120.260:FF:000183">
    <property type="entry name" value="Fucolectin"/>
    <property type="match status" value="1"/>
</dbReference>
<dbReference type="Gene3D" id="2.60.120.260">
    <property type="entry name" value="Galactose-binding domain-like"/>
    <property type="match status" value="1"/>
</dbReference>
<dbReference type="InterPro" id="IPR051941">
    <property type="entry name" value="BG_Antigen-Binding_Lectin"/>
</dbReference>
<dbReference type="InterPro" id="IPR006585">
    <property type="entry name" value="FTP1"/>
</dbReference>
<dbReference type="InterPro" id="IPR008979">
    <property type="entry name" value="Galactose-bd-like_sf"/>
</dbReference>
<dbReference type="PANTHER" id="PTHR45713">
    <property type="entry name" value="FTP DOMAIN-CONTAINING PROTEIN"/>
    <property type="match status" value="1"/>
</dbReference>
<dbReference type="PANTHER" id="PTHR45713:SF8">
    <property type="entry name" value="SI:CH211-215K15.4"/>
    <property type="match status" value="1"/>
</dbReference>
<dbReference type="Pfam" id="PF22633">
    <property type="entry name" value="F5_F8_type_C_2"/>
    <property type="match status" value="1"/>
</dbReference>
<dbReference type="SMART" id="SM00607">
    <property type="entry name" value="FTP"/>
    <property type="match status" value="1"/>
</dbReference>
<dbReference type="SUPFAM" id="SSF49785">
    <property type="entry name" value="Galactose-binding domain-like"/>
    <property type="match status" value="1"/>
</dbReference>
<organism>
    <name type="scientific">Anguilla anguilla</name>
    <name type="common">European freshwater eel</name>
    <name type="synonym">Muraena anguilla</name>
    <dbReference type="NCBI Taxonomy" id="7936"/>
    <lineage>
        <taxon>Eukaryota</taxon>
        <taxon>Metazoa</taxon>
        <taxon>Chordata</taxon>
        <taxon>Craniata</taxon>
        <taxon>Vertebrata</taxon>
        <taxon>Euteleostomi</taxon>
        <taxon>Actinopterygii</taxon>
        <taxon>Neopterygii</taxon>
        <taxon>Teleostei</taxon>
        <taxon>Anguilliformes</taxon>
        <taxon>Anguillidae</taxon>
        <taxon>Anguilla</taxon>
    </lineage>
</organism>
<sequence length="158" mass="16893">VIPEGYTQENVAVRGKATQSAQLRGEHAANSEASNAIDGNRDSNFYHGSCTHSSGQANPWWRVDLLQVYTITSVTITNRGDCCGERISGAEINIGQHLASNGVNNPECSVIGSMATGETKTFHCPAPMIGRYVVTYLPTSESLHLCEVEVNVDKPAAA</sequence>
<evidence type="ECO:0000250" key="1"/>
<evidence type="ECO:0000255" key="2"/>
<evidence type="ECO:0000269" key="3">
    <source>
    </source>
</evidence>
<evidence type="ECO:0000269" key="4">
    <source>
    </source>
</evidence>
<evidence type="ECO:0000305" key="5"/>
<evidence type="ECO:0007744" key="6">
    <source>
        <dbReference type="PDB" id="1K12"/>
    </source>
</evidence>
<evidence type="ECO:0007829" key="7">
    <source>
        <dbReference type="PDB" id="1K12"/>
    </source>
</evidence>
<comment type="function">
    <text evidence="3 4">Acts as a defensive agent. Recognizes blood group fucosylated oligosaccharides including A, B, H and Lewis B-type antigens. Does not recognize Lewis A antigen and has low affinity for monovalent haptens.</text>
</comment>
<comment type="subunit">
    <text evidence="3">Homotrimer.</text>
</comment>
<comment type="subcellular location">
    <subcellularLocation>
        <location evidence="1">Secreted</location>
    </subcellularLocation>
</comment>
<comment type="miscellaneous">
    <text>Binds 1 calcium ion per monomer.</text>
</comment>
<comment type="similarity">
    <text evidence="5">Belongs to the fucolectin family.</text>
</comment>
<protein>
    <recommendedName>
        <fullName>Fucolectin</fullName>
    </recommendedName>
</protein>
<reference key="1">
    <citation type="journal article" date="2004" name="Life Sci.">
        <title>Lectinochemical studies on the affinity of Anguilla anguilla agglutinin for mammalian glycotopes.</title>
        <authorList>
            <person name="Wu A.M."/>
            <person name="Wu J.H."/>
            <person name="Singh T."/>
            <person name="Liu J.-H."/>
            <person name="Herp A."/>
        </authorList>
    </citation>
    <scope>FUNCTION</scope>
</reference>
<reference evidence="6" key="2">
    <citation type="journal article" date="2002" name="Nat. Struct. Biol.">
        <title>A novel fucose recognition fold involved in innate immunity.</title>
        <authorList>
            <person name="Bianchet M.A."/>
            <person name="Odom E.W."/>
            <person name="Vasta G.R."/>
            <person name="Amzel L.M."/>
        </authorList>
    </citation>
    <scope>X-RAY CRYSTALLOGRAPHY (1.9 ANGSTROMS) IN COMPLEX WITH ALPHA-L-FUCOSE AND CALCIUM</scope>
    <scope>FUNCTION</scope>
    <scope>SUBUNIT</scope>
</reference>
<proteinExistence type="evidence at protein level"/>
<feature type="chain" id="PRO_0000223931" description="Fucolectin" evidence="5">
    <location>
        <begin position="1"/>
        <end position="158"/>
    </location>
</feature>
<feature type="region of interest" description="F5/8 type C-like">
    <location>
        <begin position="16"/>
        <end position="148"/>
    </location>
</feature>
<feature type="short sequence motif" description="Cell attachment site" evidence="2">
    <location>
        <begin position="79"/>
        <end position="81"/>
    </location>
</feature>
<feature type="binding site" evidence="3 6">
    <location>
        <position position="35"/>
    </location>
    <ligand>
        <name>Ca(2+)</name>
        <dbReference type="ChEBI" id="CHEBI:29108"/>
    </ligand>
</feature>
<feature type="binding site" evidence="3 6">
    <location>
        <position position="38"/>
    </location>
    <ligand>
        <name>Ca(2+)</name>
        <dbReference type="ChEBI" id="CHEBI:29108"/>
    </ligand>
</feature>
<feature type="binding site" evidence="3 6">
    <location>
        <position position="40"/>
    </location>
    <ligand>
        <name>Ca(2+)</name>
        <dbReference type="ChEBI" id="CHEBI:29108"/>
    </ligand>
</feature>
<feature type="binding site" evidence="3 6">
    <location>
        <position position="49"/>
    </location>
    <ligand>
        <name>Ca(2+)</name>
        <dbReference type="ChEBI" id="CHEBI:29108"/>
    </ligand>
</feature>
<feature type="binding site" evidence="3 6">
    <location>
        <position position="52"/>
    </location>
    <ligand>
        <name>alpha-L-fucose</name>
        <dbReference type="ChEBI" id="CHEBI:42548"/>
    </ligand>
</feature>
<feature type="binding site" evidence="3 6">
    <location>
        <position position="79"/>
    </location>
    <ligand>
        <name>alpha-L-fucose</name>
        <dbReference type="ChEBI" id="CHEBI:42548"/>
    </ligand>
</feature>
<feature type="binding site" evidence="3 6">
    <location>
        <position position="86"/>
    </location>
    <ligand>
        <name>alpha-L-fucose</name>
        <dbReference type="ChEBI" id="CHEBI:42548"/>
    </ligand>
</feature>
<feature type="binding site" evidence="3 6">
    <location>
        <position position="146"/>
    </location>
    <ligand>
        <name>Ca(2+)</name>
        <dbReference type="ChEBI" id="CHEBI:29108"/>
    </ligand>
</feature>
<feature type="binding site" evidence="3 6">
    <location>
        <position position="147"/>
    </location>
    <ligand>
        <name>Ca(2+)</name>
        <dbReference type="ChEBI" id="CHEBI:29108"/>
    </ligand>
</feature>
<feature type="disulfide bond" evidence="3">
    <location>
        <begin position="50"/>
        <end position="146"/>
    </location>
</feature>
<feature type="disulfide bond" evidence="3">
    <location>
        <begin position="82"/>
        <end position="83"/>
    </location>
</feature>
<feature type="disulfide bond" evidence="3">
    <location>
        <begin position="108"/>
        <end position="124"/>
    </location>
</feature>
<feature type="strand" evidence="7">
    <location>
        <begin position="6"/>
        <end position="10"/>
    </location>
</feature>
<feature type="helix" evidence="7">
    <location>
        <begin position="11"/>
        <end position="14"/>
    </location>
</feature>
<feature type="strand" evidence="7">
    <location>
        <begin position="15"/>
        <end position="20"/>
    </location>
</feature>
<feature type="helix" evidence="7">
    <location>
        <begin position="28"/>
        <end position="30"/>
    </location>
</feature>
<feature type="helix" evidence="7">
    <location>
        <begin position="33"/>
        <end position="37"/>
    </location>
</feature>
<feature type="helix" evidence="7">
    <location>
        <begin position="45"/>
        <end position="47"/>
    </location>
</feature>
<feature type="strand" evidence="7">
    <location>
        <begin position="60"/>
        <end position="78"/>
    </location>
</feature>
<feature type="strand" evidence="7">
    <location>
        <begin position="80"/>
        <end position="82"/>
    </location>
</feature>
<feature type="turn" evidence="7">
    <location>
        <begin position="84"/>
        <end position="89"/>
    </location>
</feature>
<feature type="strand" evidence="7">
    <location>
        <begin position="91"/>
        <end position="97"/>
    </location>
</feature>
<feature type="turn" evidence="7">
    <location>
        <begin position="99"/>
        <end position="104"/>
    </location>
</feature>
<feature type="strand" evidence="7">
    <location>
        <begin position="107"/>
        <end position="110"/>
    </location>
</feature>
<feature type="strand" evidence="7">
    <location>
        <begin position="119"/>
        <end position="136"/>
    </location>
</feature>
<feature type="strand" evidence="7">
    <location>
        <begin position="139"/>
        <end position="141"/>
    </location>
</feature>
<feature type="strand" evidence="7">
    <location>
        <begin position="145"/>
        <end position="155"/>
    </location>
</feature>
<keyword id="KW-0002">3D-structure</keyword>
<keyword id="KW-0106">Calcium</keyword>
<keyword id="KW-1015">Disulfide bond</keyword>
<keyword id="KW-0430">Lectin</keyword>
<keyword id="KW-0479">Metal-binding</keyword>
<keyword id="KW-0964">Secreted</keyword>
<accession>Q7SIC1</accession>